<keyword id="KW-0007">Acetylation</keyword>
<keyword id="KW-1015">Disulfide bond</keyword>
<keyword id="KW-0249">Electron transport</keyword>
<keyword id="KW-0472">Membrane</keyword>
<keyword id="KW-0496">Mitochondrion</keyword>
<keyword id="KW-0999">Mitochondrion inner membrane</keyword>
<keyword id="KW-1185">Reference proteome</keyword>
<keyword id="KW-0679">Respiratory chain</keyword>
<keyword id="KW-0813">Transport</keyword>
<protein>
    <recommendedName>
        <fullName>NADH dehydrogenase [ubiquinone] 1 alpha subcomplex subunit 2</fullName>
    </recommendedName>
    <alternativeName>
        <fullName>Complex I-B8</fullName>
        <shortName>CI-B8</shortName>
    </alternativeName>
    <alternativeName>
        <fullName>NADH-ubiquinone oxidoreductase B8 subunit</fullName>
    </alternativeName>
</protein>
<feature type="initiator methionine" description="Removed" evidence="2">
    <location>
        <position position="1"/>
    </location>
</feature>
<feature type="chain" id="PRO_0000251799" description="NADH dehydrogenase [ubiquinone] 1 alpha subcomplex subunit 2">
    <location>
        <begin position="2"/>
        <end position="99"/>
    </location>
</feature>
<feature type="modified residue" description="N-acetylalanine" evidence="2">
    <location>
        <position position="2"/>
    </location>
</feature>
<feature type="modified residue" description="N6-acetyllysine; alternate" evidence="3">
    <location>
        <position position="64"/>
    </location>
</feature>
<feature type="modified residue" description="N6-succinyllysine; alternate" evidence="3">
    <location>
        <position position="64"/>
    </location>
</feature>
<feature type="disulfide bond" description="Redox-active" evidence="1">
    <location>
        <begin position="24"/>
        <end position="58"/>
    </location>
</feature>
<name>NDUA2_GORGO</name>
<comment type="function">
    <text evidence="2">Accessory subunit of the mitochondrial membrane respiratory chain NADH dehydrogenase (Complex I), that is believed not to be involved in catalysis. Complex I functions in the transfer of electrons from NADH to the respiratory chain. The immediate electron acceptor for the enzyme is believed to be ubiquinone.</text>
</comment>
<comment type="subunit">
    <text evidence="2">Complex I is composed of 45 different subunits.</text>
</comment>
<comment type="subcellular location">
    <subcellularLocation>
        <location evidence="2">Mitochondrion inner membrane</location>
        <topology evidence="2">Peripheral membrane protein</topology>
        <orientation evidence="2">Matrix side</orientation>
    </subcellularLocation>
</comment>
<comment type="similarity">
    <text evidence="4">Belongs to the complex I NDUFA2 subunit family.</text>
</comment>
<organism>
    <name type="scientific">Gorilla gorilla gorilla</name>
    <name type="common">Western lowland gorilla</name>
    <dbReference type="NCBI Taxonomy" id="9595"/>
    <lineage>
        <taxon>Eukaryota</taxon>
        <taxon>Metazoa</taxon>
        <taxon>Chordata</taxon>
        <taxon>Craniata</taxon>
        <taxon>Vertebrata</taxon>
        <taxon>Euteleostomi</taxon>
        <taxon>Mammalia</taxon>
        <taxon>Eutheria</taxon>
        <taxon>Euarchontoglires</taxon>
        <taxon>Primates</taxon>
        <taxon>Haplorrhini</taxon>
        <taxon>Catarrhini</taxon>
        <taxon>Hominidae</taxon>
        <taxon>Gorilla</taxon>
    </lineage>
</organism>
<proteinExistence type="inferred from homology"/>
<accession>Q0MQ92</accession>
<gene>
    <name type="primary">NDUFA2</name>
</gene>
<dbReference type="EMBL" id="DQ885742">
    <property type="protein sequence ID" value="ABH12251.1"/>
    <property type="molecule type" value="mRNA"/>
</dbReference>
<dbReference type="RefSeq" id="NP_001266516.1">
    <property type="nucleotide sequence ID" value="NM_001279587.1"/>
</dbReference>
<dbReference type="SMR" id="Q0MQ92"/>
<dbReference type="FunCoup" id="Q0MQ92">
    <property type="interactions" value="1325"/>
</dbReference>
<dbReference type="STRING" id="9593.ENSGGOP00000013040"/>
<dbReference type="GeneID" id="101147705"/>
<dbReference type="KEGG" id="ggo:101147705"/>
<dbReference type="CTD" id="4695"/>
<dbReference type="eggNOG" id="KOG3446">
    <property type="taxonomic scope" value="Eukaryota"/>
</dbReference>
<dbReference type="HOGENOM" id="CLU_110897_0_0_1"/>
<dbReference type="InParanoid" id="Q0MQ92"/>
<dbReference type="OrthoDB" id="8374at9604"/>
<dbReference type="Proteomes" id="UP000001519">
    <property type="component" value="Unplaced"/>
</dbReference>
<dbReference type="GO" id="GO:0005743">
    <property type="term" value="C:mitochondrial inner membrane"/>
    <property type="evidence" value="ECO:0007669"/>
    <property type="project" value="UniProtKB-SubCell"/>
</dbReference>
<dbReference type="GO" id="GO:0045271">
    <property type="term" value="C:respiratory chain complex I"/>
    <property type="evidence" value="ECO:0000250"/>
    <property type="project" value="UniProtKB"/>
</dbReference>
<dbReference type="FunFam" id="3.40.30.10:FF:000127">
    <property type="entry name" value="NADH dehydrogenase [ubiquinone] 1 alpha subcomplex subunit 2"/>
    <property type="match status" value="1"/>
</dbReference>
<dbReference type="Gene3D" id="3.40.30.10">
    <property type="entry name" value="Glutaredoxin"/>
    <property type="match status" value="1"/>
</dbReference>
<dbReference type="InterPro" id="IPR016464">
    <property type="entry name" value="NADH_Ub_cplx-1_asu_su-2"/>
</dbReference>
<dbReference type="InterPro" id="IPR007741">
    <property type="entry name" value="Ribosomal_mL43/mS25/NADH_DH"/>
</dbReference>
<dbReference type="InterPro" id="IPR036249">
    <property type="entry name" value="Thioredoxin-like_sf"/>
</dbReference>
<dbReference type="PANTHER" id="PTHR12878:SF6">
    <property type="entry name" value="NADH DEHYDROGENASE [UBIQUINONE] 1 ALPHA SUBCOMPLEX SUBUNIT 2"/>
    <property type="match status" value="1"/>
</dbReference>
<dbReference type="PANTHER" id="PTHR12878">
    <property type="entry name" value="NADH-UBIQUINONE OXIDOREDUCTASE B8 SUBUNIT"/>
    <property type="match status" value="1"/>
</dbReference>
<dbReference type="Pfam" id="PF05047">
    <property type="entry name" value="L51_S25_CI-B8"/>
    <property type="match status" value="1"/>
</dbReference>
<dbReference type="PIRSF" id="PIRSF005822">
    <property type="entry name" value="NDUA2"/>
    <property type="match status" value="1"/>
</dbReference>
<dbReference type="SMART" id="SM00916">
    <property type="entry name" value="L51_S25_CI-B8"/>
    <property type="match status" value="1"/>
</dbReference>
<dbReference type="SUPFAM" id="SSF52833">
    <property type="entry name" value="Thioredoxin-like"/>
    <property type="match status" value="1"/>
</dbReference>
<evidence type="ECO:0000250" key="1"/>
<evidence type="ECO:0000250" key="2">
    <source>
        <dbReference type="UniProtKB" id="O43678"/>
    </source>
</evidence>
<evidence type="ECO:0000250" key="3">
    <source>
        <dbReference type="UniProtKB" id="Q9CQ75"/>
    </source>
</evidence>
<evidence type="ECO:0000305" key="4"/>
<sequence length="99" mass="10954">MAAAAASRGIGAKLGLREIRIHLCQRSPGSRGVRDFIEKRYVELKKANSDLPILIRECSDVQPKLWARYAFGQETNVPLNNFSADQVTRALENVLSGKA</sequence>
<reference key="1">
    <citation type="journal article" date="2006" name="Gene">
        <title>Adaptive selection of mitochondrial complex I subunits during primate radiation.</title>
        <authorList>
            <person name="Mishmar D."/>
            <person name="Ruiz-Pesini E."/>
            <person name="Mondragon-Palomino M."/>
            <person name="Procaccio V."/>
            <person name="Gaut B."/>
            <person name="Wallace D.C."/>
        </authorList>
    </citation>
    <scope>NUCLEOTIDE SEQUENCE [MRNA]</scope>
</reference>